<accession>P38298</accession>
<accession>D6VQH8</accession>
<name>YPC1_YEAST</name>
<feature type="chain" id="PRO_0000212466" description="Alkaline ceramidase YPC1">
    <location>
        <begin position="1"/>
        <end position="316"/>
    </location>
</feature>
<feature type="topological domain" description="Lumenal" evidence="6 12">
    <location>
        <begin position="1"/>
        <end position="36"/>
    </location>
</feature>
<feature type="intramembrane region" evidence="13">
    <location>
        <begin position="37"/>
        <end position="57"/>
    </location>
</feature>
<feature type="topological domain" description="Lumenal" evidence="12 13">
    <location>
        <begin position="58"/>
        <end position="68"/>
    </location>
</feature>
<feature type="intramembrane region" evidence="13">
    <location>
        <begin position="69"/>
        <end position="89"/>
    </location>
</feature>
<feature type="topological domain" description="Lumenal" evidence="12 13">
    <location>
        <begin position="90"/>
        <end position="93"/>
    </location>
</feature>
<feature type="transmembrane region" description="Helical" evidence="1">
    <location>
        <begin position="94"/>
        <end position="114"/>
    </location>
</feature>
<feature type="topological domain" description="Cytoplasmic" evidence="12 13">
    <location>
        <begin position="115"/>
        <end position="135"/>
    </location>
</feature>
<feature type="transmembrane region" description="Helical" evidence="1">
    <location>
        <begin position="136"/>
        <end position="156"/>
    </location>
</feature>
<feature type="topological domain" description="Lumenal" evidence="12 13">
    <location>
        <begin position="157"/>
        <end position="160"/>
    </location>
</feature>
<feature type="intramembrane region" evidence="13">
    <location>
        <begin position="161"/>
        <end position="181"/>
    </location>
</feature>
<feature type="topological domain" description="Lumenal" evidence="12 13">
    <location>
        <begin position="182"/>
        <end position="195"/>
    </location>
</feature>
<feature type="intramembrane region" evidence="13">
    <location>
        <begin position="196"/>
        <end position="216"/>
    </location>
</feature>
<feature type="topological domain" description="Lumenal" evidence="12 13">
    <location>
        <begin position="217"/>
        <end position="228"/>
    </location>
</feature>
<feature type="transmembrane region" description="Helical" evidence="1">
    <location>
        <begin position="229"/>
        <end position="249"/>
    </location>
</feature>
<feature type="topological domain" description="Cytoplasmic" evidence="5 6">
    <location>
        <begin position="250"/>
        <end position="316"/>
    </location>
</feature>
<feature type="disulfide bond" evidence="6">
    <location>
        <begin position="27"/>
        <end position="219"/>
    </location>
</feature>
<dbReference type="EC" id="3.5.1.-"/>
<dbReference type="EMBL" id="AF191745">
    <property type="protein sequence ID" value="AAF43604.1"/>
    <property type="molecule type" value="Genomic_DNA"/>
</dbReference>
<dbReference type="EMBL" id="U02073">
    <property type="protein sequence ID" value="AAB60277.1"/>
    <property type="molecule type" value="Genomic_DNA"/>
</dbReference>
<dbReference type="EMBL" id="Z36052">
    <property type="protein sequence ID" value="CAA85144.1"/>
    <property type="molecule type" value="Genomic_DNA"/>
</dbReference>
<dbReference type="EMBL" id="BK006936">
    <property type="protein sequence ID" value="DAA07298.1"/>
    <property type="molecule type" value="Genomic_DNA"/>
</dbReference>
<dbReference type="PIR" id="S46055">
    <property type="entry name" value="S46055"/>
</dbReference>
<dbReference type="RefSeq" id="NP_009742.1">
    <property type="nucleotide sequence ID" value="NM_001178531.1"/>
</dbReference>
<dbReference type="SMR" id="P38298"/>
<dbReference type="BioGRID" id="32881">
    <property type="interactions" value="273"/>
</dbReference>
<dbReference type="DIP" id="DIP-7405N"/>
<dbReference type="FunCoup" id="P38298">
    <property type="interactions" value="680"/>
</dbReference>
<dbReference type="IntAct" id="P38298">
    <property type="interactions" value="30"/>
</dbReference>
<dbReference type="MINT" id="P38298"/>
<dbReference type="STRING" id="4932.YBR183W"/>
<dbReference type="SwissLipids" id="SLP:000000372"/>
<dbReference type="PaxDb" id="4932-YBR183W"/>
<dbReference type="PeptideAtlas" id="P38298"/>
<dbReference type="EnsemblFungi" id="YBR183W_mRNA">
    <property type="protein sequence ID" value="YBR183W"/>
    <property type="gene ID" value="YBR183W"/>
</dbReference>
<dbReference type="GeneID" id="852481"/>
<dbReference type="KEGG" id="sce:YBR183W"/>
<dbReference type="AGR" id="SGD:S000000387"/>
<dbReference type="SGD" id="S000000387">
    <property type="gene designation" value="YPC1"/>
</dbReference>
<dbReference type="VEuPathDB" id="FungiDB:YBR183W"/>
<dbReference type="eggNOG" id="KOG2329">
    <property type="taxonomic scope" value="Eukaryota"/>
</dbReference>
<dbReference type="GeneTree" id="ENSGT00730000110920"/>
<dbReference type="HOGENOM" id="CLU_063293_3_0_1"/>
<dbReference type="InParanoid" id="P38298"/>
<dbReference type="OMA" id="IMFEPLR"/>
<dbReference type="OrthoDB" id="187171at2759"/>
<dbReference type="BioCyc" id="MetaCyc:YBR183W-MONOMER"/>
<dbReference type="BioCyc" id="YEAST:YBR183W-MONOMER"/>
<dbReference type="BRENDA" id="3.5.1.23">
    <property type="organism ID" value="984"/>
</dbReference>
<dbReference type="BioGRID-ORCS" id="852481">
    <property type="hits" value="0 hits in 10 CRISPR screens"/>
</dbReference>
<dbReference type="PRO" id="PR:P38298"/>
<dbReference type="Proteomes" id="UP000002311">
    <property type="component" value="Chromosome II"/>
</dbReference>
<dbReference type="RNAct" id="P38298">
    <property type="molecule type" value="protein"/>
</dbReference>
<dbReference type="GO" id="GO:0032541">
    <property type="term" value="C:cortical endoplasmic reticulum"/>
    <property type="evidence" value="ECO:0000314"/>
    <property type="project" value="SGD"/>
</dbReference>
<dbReference type="GO" id="GO:0005783">
    <property type="term" value="C:endoplasmic reticulum"/>
    <property type="evidence" value="ECO:0000314"/>
    <property type="project" value="SGD"/>
</dbReference>
<dbReference type="GO" id="GO:0005789">
    <property type="term" value="C:endoplasmic reticulum membrane"/>
    <property type="evidence" value="ECO:0000318"/>
    <property type="project" value="GO_Central"/>
</dbReference>
<dbReference type="GO" id="GO:0017040">
    <property type="term" value="F:N-acylsphingosine amidohydrolase activity"/>
    <property type="evidence" value="ECO:0000315"/>
    <property type="project" value="SGD"/>
</dbReference>
<dbReference type="GO" id="GO:0050291">
    <property type="term" value="F:sphingosine N-acyltransferase activity"/>
    <property type="evidence" value="ECO:0000315"/>
    <property type="project" value="SGD"/>
</dbReference>
<dbReference type="GO" id="GO:0046513">
    <property type="term" value="P:ceramide biosynthetic process"/>
    <property type="evidence" value="ECO:0000316"/>
    <property type="project" value="SGD"/>
</dbReference>
<dbReference type="GO" id="GO:0046514">
    <property type="term" value="P:ceramide catabolic process"/>
    <property type="evidence" value="ECO:0000315"/>
    <property type="project" value="SGD"/>
</dbReference>
<dbReference type="InterPro" id="IPR008901">
    <property type="entry name" value="ACER"/>
</dbReference>
<dbReference type="PANTHER" id="PTHR46187">
    <property type="entry name" value="ALKALINE CERAMIDASE 3"/>
    <property type="match status" value="1"/>
</dbReference>
<dbReference type="PANTHER" id="PTHR46187:SF3">
    <property type="entry name" value="ALKALINE CERAMIDASE 3"/>
    <property type="match status" value="1"/>
</dbReference>
<dbReference type="Pfam" id="PF05875">
    <property type="entry name" value="Ceramidase"/>
    <property type="match status" value="1"/>
</dbReference>
<proteinExistence type="evidence at protein level"/>
<sequence length="316" mass="36420">MGIFRWNYPESSVPGVWGETTSTIDWCEENYVVSPYIAEWSNTLTNSVFILSAIYTTYSAYKNKLEKRFLLIGFGYGLVGVGSWLFHMTLKYRFQLLDELPMIYAMCIPTWSLVCEAKEALLNGDNHKKVPLFEQIFIGVIIGLAVTTASILYVIYKNVDIHQILFGVQIVVVAATAGSLTYRYVHDPLAKRNLKASMALGAILFLSGYISWLLDIHYCSFWVHVRRSILALPLGVLLEPHGWWHILTGMGIYFYIVSLEHLRVITLNVSCNYQFIWRWKVFPELIWKGRKPSTRYSLELFGPYVEDQSIEVKKEK</sequence>
<organism>
    <name type="scientific">Saccharomyces cerevisiae (strain ATCC 204508 / S288c)</name>
    <name type="common">Baker's yeast</name>
    <dbReference type="NCBI Taxonomy" id="559292"/>
    <lineage>
        <taxon>Eukaryota</taxon>
        <taxon>Fungi</taxon>
        <taxon>Dikarya</taxon>
        <taxon>Ascomycota</taxon>
        <taxon>Saccharomycotina</taxon>
        <taxon>Saccharomycetes</taxon>
        <taxon>Saccharomycetales</taxon>
        <taxon>Saccharomycetaceae</taxon>
        <taxon>Saccharomyces</taxon>
    </lineage>
</organism>
<reference key="1">
    <citation type="journal article" date="2000" name="J. Biol. Chem.">
        <title>Cloning of an alkaline ceramidase from Saccharomyces cerevisiae. An enzyme with reverse (CoA-independent) ceramide synthase activity.</title>
        <authorList>
            <person name="Mao C."/>
            <person name="Xu R."/>
            <person name="Bielawska A."/>
            <person name="Obeid L.M."/>
        </authorList>
    </citation>
    <scope>NUCLEOTIDE SEQUENCE [GENOMIC DNA]</scope>
    <scope>CATALYTIC ACTIVITY</scope>
</reference>
<reference key="2">
    <citation type="journal article" date="1994" name="Yeast">
        <title>A 12.5 kb fragment of the yeast chromosome II contains two adjacent genes encoding ribosomal proteins and six putative new genes, one of which encodes a putative transcriptional factor.</title>
        <authorList>
            <person name="Demolis N."/>
            <person name="Jacquet M."/>
            <person name="Mallet L."/>
        </authorList>
    </citation>
    <scope>NUCLEOTIDE SEQUENCE [GENOMIC DNA]</scope>
    <source>
        <strain>ATCC 204508 / S288c</strain>
    </source>
</reference>
<reference key="3">
    <citation type="journal article" date="1994" name="EMBO J.">
        <title>Complete DNA sequence of yeast chromosome II.</title>
        <authorList>
            <person name="Feldmann H."/>
            <person name="Aigle M."/>
            <person name="Aljinovic G."/>
            <person name="Andre B."/>
            <person name="Baclet M.C."/>
            <person name="Barthe C."/>
            <person name="Baur A."/>
            <person name="Becam A.-M."/>
            <person name="Biteau N."/>
            <person name="Boles E."/>
            <person name="Brandt T."/>
            <person name="Brendel M."/>
            <person name="Brueckner M."/>
            <person name="Bussereau F."/>
            <person name="Christiansen C."/>
            <person name="Contreras R."/>
            <person name="Crouzet M."/>
            <person name="Cziepluch C."/>
            <person name="Demolis N."/>
            <person name="Delaveau T."/>
            <person name="Doignon F."/>
            <person name="Domdey H."/>
            <person name="Duesterhus S."/>
            <person name="Dubois E."/>
            <person name="Dujon B."/>
            <person name="El Bakkoury M."/>
            <person name="Entian K.-D."/>
            <person name="Feuermann M."/>
            <person name="Fiers W."/>
            <person name="Fobo G.M."/>
            <person name="Fritz C."/>
            <person name="Gassenhuber J."/>
            <person name="Glansdorff N."/>
            <person name="Goffeau A."/>
            <person name="Grivell L.A."/>
            <person name="de Haan M."/>
            <person name="Hein C."/>
            <person name="Herbert C.J."/>
            <person name="Hollenberg C.P."/>
            <person name="Holmstroem K."/>
            <person name="Jacq C."/>
            <person name="Jacquet M."/>
            <person name="Jauniaux J.-C."/>
            <person name="Jonniaux J.-L."/>
            <person name="Kallesoee T."/>
            <person name="Kiesau P."/>
            <person name="Kirchrath L."/>
            <person name="Koetter P."/>
            <person name="Korol S."/>
            <person name="Liebl S."/>
            <person name="Logghe M."/>
            <person name="Lohan A.J.E."/>
            <person name="Louis E.J."/>
            <person name="Li Z.Y."/>
            <person name="Maat M.J."/>
            <person name="Mallet L."/>
            <person name="Mannhaupt G."/>
            <person name="Messenguy F."/>
            <person name="Miosga T."/>
            <person name="Molemans F."/>
            <person name="Mueller S."/>
            <person name="Nasr F."/>
            <person name="Obermaier B."/>
            <person name="Perea J."/>
            <person name="Pierard A."/>
            <person name="Piravandi E."/>
            <person name="Pohl F.M."/>
            <person name="Pohl T.M."/>
            <person name="Potier S."/>
            <person name="Proft M."/>
            <person name="Purnelle B."/>
            <person name="Ramezani Rad M."/>
            <person name="Rieger M."/>
            <person name="Rose M."/>
            <person name="Schaaff-Gerstenschlaeger I."/>
            <person name="Scherens B."/>
            <person name="Schwarzlose C."/>
            <person name="Skala J."/>
            <person name="Slonimski P.P."/>
            <person name="Smits P.H.M."/>
            <person name="Souciet J.-L."/>
            <person name="Steensma H.Y."/>
            <person name="Stucka R."/>
            <person name="Urrestarazu L.A."/>
            <person name="van der Aart Q.J.M."/>
            <person name="Van Dyck L."/>
            <person name="Vassarotti A."/>
            <person name="Vetter I."/>
            <person name="Vierendeels F."/>
            <person name="Vissers S."/>
            <person name="Wagner G."/>
            <person name="de Wergifosse P."/>
            <person name="Wolfe K.H."/>
            <person name="Zagulski M."/>
            <person name="Zimmermann F.K."/>
            <person name="Mewes H.-W."/>
            <person name="Kleine K."/>
        </authorList>
    </citation>
    <scope>NUCLEOTIDE SEQUENCE [LARGE SCALE GENOMIC DNA]</scope>
    <source>
        <strain>ATCC 204508 / S288c</strain>
    </source>
</reference>
<reference key="4">
    <citation type="journal article" date="2014" name="G3 (Bethesda)">
        <title>The reference genome sequence of Saccharomyces cerevisiae: Then and now.</title>
        <authorList>
            <person name="Engel S.R."/>
            <person name="Dietrich F.S."/>
            <person name="Fisk D.G."/>
            <person name="Binkley G."/>
            <person name="Balakrishnan R."/>
            <person name="Costanzo M.C."/>
            <person name="Dwight S.S."/>
            <person name="Hitz B.C."/>
            <person name="Karra K."/>
            <person name="Nash R.S."/>
            <person name="Weng S."/>
            <person name="Wong E.D."/>
            <person name="Lloyd P."/>
            <person name="Skrzypek M.S."/>
            <person name="Miyasato S.R."/>
            <person name="Simison M."/>
            <person name="Cherry J.M."/>
        </authorList>
    </citation>
    <scope>GENOME REANNOTATION</scope>
    <source>
        <strain>ATCC 204508 / S288c</strain>
    </source>
</reference>
<reference key="5">
    <citation type="journal article" date="2000" name="J. Biol. Chem.">
        <title>Cloning and characterization of a Saccharomyces cerevisiae alkaline ceramidase with specificity for dihydroceramide.</title>
        <authorList>
            <person name="Mao C."/>
            <person name="Xu R."/>
            <person name="Bielawska A."/>
            <person name="Szulc Z.M."/>
            <person name="Obeid L.M."/>
        </authorList>
    </citation>
    <scope>FUNCTION</scope>
    <scope>CATALYTIC ACTIVITY</scope>
</reference>
<reference key="6">
    <citation type="journal article" date="2001" name="Mol. Biol. Cell">
        <title>Lag1p and Lac1p are essential for the acyl-CoA-dependent ceramide synthase reaction in Saccharomyces cerevisae.</title>
        <authorList>
            <person name="Schorling S."/>
            <person name="Vallee B."/>
            <person name="Barz W.P."/>
            <person name="Riezman H."/>
            <person name="Oesterhelt D."/>
        </authorList>
    </citation>
    <scope>FUNCTION</scope>
    <scope>CATALYTIC ACTIVITY</scope>
</reference>
<reference key="7">
    <citation type="journal article" date="2006" name="Proc. Natl. Acad. Sci. U.S.A.">
        <title>A global topology map of the Saccharomyces cerevisiae membrane proteome.</title>
        <authorList>
            <person name="Kim H."/>
            <person name="Melen K."/>
            <person name="Oesterberg M."/>
            <person name="von Heijne G."/>
        </authorList>
    </citation>
    <scope>TOPOLOGY [LARGE SCALE ANALYSIS]</scope>
    <source>
        <strain>ATCC 208353 / W303-1A</strain>
    </source>
</reference>
<reference key="8">
    <citation type="journal article" date="2013" name="Biochem. J.">
        <title>Membrane topology of yeast alkaline ceramidase YPC1.</title>
        <authorList>
            <person name="Ramachandra N."/>
            <person name="Conzelmann A."/>
        </authorList>
    </citation>
    <scope>TOPOLOGY</scope>
</reference>
<reference key="9">
    <citation type="journal article" date="2014" name="FEMS Yeast Res.">
        <title>Characterization of yeast mutants lacking alkaline ceramidases YPC1 and YDC1.</title>
        <authorList>
            <person name="Voynova N.S."/>
            <person name="Mallela S.K."/>
            <person name="Vazquez H.M."/>
            <person name="Cerantola V."/>
            <person name="Sonderegger M."/>
            <person name="Knudsen J."/>
            <person name="Ejsing C.S."/>
            <person name="Conzelmann A."/>
        </authorList>
    </citation>
    <scope>FUNCTION</scope>
    <scope>SUBCELLULAR LOCATION</scope>
</reference>
<comment type="function">
    <text evidence="2 3 4 7">Alkaline ceramidase that hydrolyzes phytoceramide and also dihydroceramide into phytosphingosine or dihydrosphingosine. Prefers phytoceramide. Also has reverse activity as acyl-CoA-independent ceramide synthase, catalyzing synthesis of phytoceramide and dihydroceramide from palmitic acid and phytosphingosine or dihydrosphingosine. Is not responsible for the breakdown of unsaturated ceramide (PubMed:10702247, PubMed:10900202, PubMed:11694577, PubMed:24866405). Preferentially uses very long chain fatty acids (C-24 and C-26) in vivo compared to C-16 in vitro (PubMed:24866405).</text>
</comment>
<comment type="catalytic activity">
    <reaction evidence="2 3">
        <text>N-hexanoyl-sphinganine + H2O = hexanoate + sphinganine</text>
        <dbReference type="Rhea" id="RHEA:38887"/>
        <dbReference type="ChEBI" id="CHEBI:15377"/>
        <dbReference type="ChEBI" id="CHEBI:17120"/>
        <dbReference type="ChEBI" id="CHEBI:57817"/>
        <dbReference type="ChEBI" id="CHEBI:76226"/>
    </reaction>
    <physiologicalReaction direction="left-to-right" evidence="9 10">
        <dbReference type="Rhea" id="RHEA:38888"/>
    </physiologicalReaction>
</comment>
<comment type="catalytic activity">
    <reaction evidence="3">
        <text>sphinganine + hexadecanoate = N-hexadecanoylsphinganine + H2O</text>
        <dbReference type="Rhea" id="RHEA:43440"/>
        <dbReference type="ChEBI" id="CHEBI:7896"/>
        <dbReference type="ChEBI" id="CHEBI:15377"/>
        <dbReference type="ChEBI" id="CHEBI:57817"/>
        <dbReference type="ChEBI" id="CHEBI:67042"/>
    </reaction>
    <physiologicalReaction direction="left-to-right" evidence="10">
        <dbReference type="Rhea" id="RHEA:43441"/>
    </physiologicalReaction>
</comment>
<comment type="catalytic activity">
    <reaction evidence="2 3">
        <text>N-hexadecanoyl-(4R)-hydroxysphinganine + H2O = (4R)-hydroxysphinganine + hexadecanoate</text>
        <dbReference type="Rhea" id="RHEA:33755"/>
        <dbReference type="ChEBI" id="CHEBI:7896"/>
        <dbReference type="ChEBI" id="CHEBI:15377"/>
        <dbReference type="ChEBI" id="CHEBI:64124"/>
        <dbReference type="ChEBI" id="CHEBI:65107"/>
    </reaction>
    <physiologicalReaction direction="left-to-right" evidence="9 10">
        <dbReference type="Rhea" id="RHEA:33756"/>
    </physiologicalReaction>
    <physiologicalReaction direction="right-to-left" evidence="9 10">
        <dbReference type="Rhea" id="RHEA:33757"/>
    </physiologicalReaction>
</comment>
<comment type="catalytic activity">
    <reaction evidence="2">
        <text>N-hexadecanoylsphing-4-enine + H2O = sphing-4-enine + hexadecanoate</text>
        <dbReference type="Rhea" id="RHEA:38891"/>
        <dbReference type="ChEBI" id="CHEBI:7896"/>
        <dbReference type="ChEBI" id="CHEBI:15377"/>
        <dbReference type="ChEBI" id="CHEBI:57756"/>
        <dbReference type="ChEBI" id="CHEBI:72959"/>
    </reaction>
    <physiologicalReaction direction="left-to-right" evidence="9">
        <dbReference type="Rhea" id="RHEA:38892"/>
    </physiologicalReaction>
</comment>
<comment type="catalytic activity">
    <reaction evidence="4">
        <text>an N-acyl-(4R)-4-hydroxysphinganine + H2O = (4R)-hydroxysphinganine + a fatty acid</text>
        <dbReference type="Rhea" id="RHEA:33555"/>
        <dbReference type="ChEBI" id="CHEBI:15377"/>
        <dbReference type="ChEBI" id="CHEBI:28868"/>
        <dbReference type="ChEBI" id="CHEBI:31998"/>
        <dbReference type="ChEBI" id="CHEBI:64124"/>
    </reaction>
    <physiologicalReaction direction="right-to-left" evidence="11">
        <dbReference type="Rhea" id="RHEA:33557"/>
    </physiologicalReaction>
</comment>
<comment type="subcellular location">
    <subcellularLocation>
        <location evidence="3 7">Endoplasmic reticulum membrane</location>
        <topology evidence="1">Multi-pass membrane protein</topology>
    </subcellularLocation>
    <text evidence="7">Localizes to the cortical ER.</text>
</comment>
<comment type="similarity">
    <text evidence="8">Belongs to the alkaline ceramidase family.</text>
</comment>
<gene>
    <name type="primary">YPC1</name>
    <name type="ordered locus">YBR183W</name>
    <name type="ORF">YBR1305</name>
</gene>
<evidence type="ECO:0000255" key="1"/>
<evidence type="ECO:0000269" key="2">
    <source>
    </source>
</evidence>
<evidence type="ECO:0000269" key="3">
    <source>
    </source>
</evidence>
<evidence type="ECO:0000269" key="4">
    <source>
    </source>
</evidence>
<evidence type="ECO:0000269" key="5">
    <source>
    </source>
</evidence>
<evidence type="ECO:0000269" key="6">
    <source>
    </source>
</evidence>
<evidence type="ECO:0000269" key="7">
    <source>
    </source>
</evidence>
<evidence type="ECO:0000305" key="8"/>
<evidence type="ECO:0000305" key="9">
    <source>
    </source>
</evidence>
<evidence type="ECO:0000305" key="10">
    <source>
    </source>
</evidence>
<evidence type="ECO:0000305" key="11">
    <source>
    </source>
</evidence>
<evidence type="ECO:0000305" key="12">
    <source>
    </source>
</evidence>
<evidence type="ECO:0000305" key="13">
    <source>
    </source>
</evidence>
<protein>
    <recommendedName>
        <fullName>Alkaline ceramidase YPC1</fullName>
        <ecNumber>3.5.1.-</ecNumber>
    </recommendedName>
    <alternativeName>
        <fullName>Acyl-CoA-independent ceramide synthase</fullName>
    </alternativeName>
</protein>
<keyword id="KW-1015">Disulfide bond</keyword>
<keyword id="KW-0256">Endoplasmic reticulum</keyword>
<keyword id="KW-0378">Hydrolase</keyword>
<keyword id="KW-0472">Membrane</keyword>
<keyword id="KW-1185">Reference proteome</keyword>
<keyword id="KW-0812">Transmembrane</keyword>
<keyword id="KW-1133">Transmembrane helix</keyword>